<proteinExistence type="evidence at protein level"/>
<accession>P11477</accession>
<accession>Q61448</accession>
<dbReference type="EMBL" id="M33225">
    <property type="protein sequence ID" value="AAA63296.1"/>
    <property type="molecule type" value="mRNA"/>
</dbReference>
<dbReference type="EMBL" id="U02995">
    <property type="protein sequence ID" value="AAB60675.1"/>
    <property type="molecule type" value="Genomic_DNA"/>
</dbReference>
<dbReference type="EMBL" id="U02994">
    <property type="protein sequence ID" value="AAB60675.1"/>
    <property type="status" value="JOINED"/>
    <property type="molecule type" value="Genomic_DNA"/>
</dbReference>
<dbReference type="EMBL" id="X15617">
    <property type="protein sequence ID" value="CAA33636.1"/>
    <property type="molecule type" value="mRNA"/>
</dbReference>
<dbReference type="PIR" id="A36438">
    <property type="entry name" value="A43279"/>
</dbReference>
<dbReference type="RefSeq" id="NP_034161.2">
    <property type="nucleotide sequence ID" value="NM_010031.2"/>
</dbReference>
<dbReference type="SMR" id="P11477"/>
<dbReference type="FunCoup" id="P11477">
    <property type="interactions" value="42"/>
</dbReference>
<dbReference type="PhosphoSitePlus" id="P11477"/>
<dbReference type="PeptideAtlas" id="P11477"/>
<dbReference type="DNASU" id="13216"/>
<dbReference type="GeneID" id="13216"/>
<dbReference type="KEGG" id="mmu:13216"/>
<dbReference type="AGR" id="MGI:94880"/>
<dbReference type="CTD" id="1667"/>
<dbReference type="MGI" id="MGI:94880">
    <property type="gene designation" value="Defa1"/>
</dbReference>
<dbReference type="InParanoid" id="P11477"/>
<dbReference type="PhylomeDB" id="P11477"/>
<dbReference type="PRO" id="PR:P11477"/>
<dbReference type="Proteomes" id="UP000000589">
    <property type="component" value="Unplaced"/>
</dbReference>
<dbReference type="RNAct" id="P11477">
    <property type="molecule type" value="protein"/>
</dbReference>
<dbReference type="GO" id="GO:0005615">
    <property type="term" value="C:extracellular space"/>
    <property type="evidence" value="ECO:0000314"/>
    <property type="project" value="MGI"/>
</dbReference>
<dbReference type="GO" id="GO:0071222">
    <property type="term" value="P:cellular response to lipopolysaccharide"/>
    <property type="evidence" value="ECO:0000316"/>
    <property type="project" value="MGI"/>
</dbReference>
<dbReference type="GO" id="GO:0042742">
    <property type="term" value="P:defense response to bacterium"/>
    <property type="evidence" value="ECO:0000314"/>
    <property type="project" value="MGI"/>
</dbReference>
<dbReference type="GO" id="GO:0050829">
    <property type="term" value="P:defense response to Gram-negative bacterium"/>
    <property type="evidence" value="ECO:0000316"/>
    <property type="project" value="MGI"/>
</dbReference>
<dbReference type="GO" id="GO:0050830">
    <property type="term" value="P:defense response to Gram-positive bacterium"/>
    <property type="evidence" value="ECO:0000316"/>
    <property type="project" value="MGI"/>
</dbReference>
<dbReference type="GO" id="GO:0009410">
    <property type="term" value="P:response to xenobiotic stimulus"/>
    <property type="evidence" value="ECO:0000314"/>
    <property type="project" value="MGI"/>
</dbReference>
<dbReference type="InterPro" id="IPR016327">
    <property type="entry name" value="Alpha-defensin"/>
</dbReference>
<dbReference type="InterPro" id="IPR006081">
    <property type="entry name" value="Alpha-defensin_C"/>
</dbReference>
<dbReference type="InterPro" id="IPR002366">
    <property type="entry name" value="Alpha-defensin_N"/>
</dbReference>
<dbReference type="InterPro" id="IPR006080">
    <property type="entry name" value="Beta/alpha-defensin_C"/>
</dbReference>
<dbReference type="PANTHER" id="PTHR11876">
    <property type="entry name" value="ALPHA-DEFENSIN 1"/>
    <property type="match status" value="1"/>
</dbReference>
<dbReference type="PANTHER" id="PTHR11876:SF2">
    <property type="entry name" value="ALPHA-DEFENSIN 1-RELATED"/>
    <property type="match status" value="1"/>
</dbReference>
<dbReference type="Pfam" id="PF00323">
    <property type="entry name" value="Defensin_1"/>
    <property type="match status" value="1"/>
</dbReference>
<dbReference type="Pfam" id="PF00879">
    <property type="entry name" value="Defensin_propep"/>
    <property type="match status" value="1"/>
</dbReference>
<dbReference type="PIRSF" id="PIRSF001875">
    <property type="entry name" value="Alpha-defensin"/>
    <property type="match status" value="1"/>
</dbReference>
<dbReference type="SMART" id="SM01418">
    <property type="entry name" value="Defensin_propep"/>
    <property type="match status" value="1"/>
</dbReference>
<dbReference type="SMART" id="SM00048">
    <property type="entry name" value="DEFSN"/>
    <property type="match status" value="1"/>
</dbReference>
<dbReference type="SUPFAM" id="SSF57392">
    <property type="entry name" value="Defensin-like"/>
    <property type="match status" value="1"/>
</dbReference>
<dbReference type="PROSITE" id="PS00269">
    <property type="entry name" value="DEFENSIN"/>
    <property type="match status" value="1"/>
</dbReference>
<gene>
    <name type="primary">Defa1</name>
    <name type="synonym">Defcr</name>
    <name type="synonym">Defcr1</name>
</gene>
<protein>
    <recommendedName>
        <fullName>Alpha-defensin 1</fullName>
    </recommendedName>
    <alternativeName>
        <fullName>Cryptdin-1</fullName>
    </alternativeName>
    <alternativeName>
        <fullName>Defensin-related cryptdin peptide</fullName>
    </alternativeName>
</protein>
<sequence>MKKLVLLFALVLLGFQVQADSIQNTDEETKTEEQPGEEDQAVSVSFGDPEGTSLQEESLRDLVCYCRSRGCKGRERMNGTCRKGHLLYTLCCR</sequence>
<feature type="signal peptide" evidence="2">
    <location>
        <begin position="1"/>
        <end position="19"/>
    </location>
</feature>
<feature type="propeptide" id="PRO_0000006817" evidence="2">
    <location>
        <begin position="20"/>
        <end position="58"/>
    </location>
</feature>
<feature type="peptide" id="PRO_0000006818" description="Alpha-defensin 1">
    <location>
        <begin position="59"/>
        <end position="93"/>
    </location>
</feature>
<feature type="region of interest" description="Disordered" evidence="3">
    <location>
        <begin position="24"/>
        <end position="54"/>
    </location>
</feature>
<feature type="disulfide bond" evidence="1">
    <location>
        <begin position="64"/>
        <end position="92"/>
    </location>
</feature>
<feature type="disulfide bond" evidence="1">
    <location>
        <begin position="66"/>
        <end position="81"/>
    </location>
</feature>
<feature type="disulfide bond" evidence="1">
    <location>
        <begin position="71"/>
        <end position="91"/>
    </location>
</feature>
<feature type="sequence conflict" description="In Ref. 2; AAB60675." evidence="4" ref="2">
    <original>K</original>
    <variation>T</variation>
    <location>
        <position position="3"/>
    </location>
</feature>
<feature type="sequence conflict" description="In Ref. 2; AAB60675." evidence="4" ref="2">
    <original>F</original>
    <variation>S</variation>
    <location>
        <position position="8"/>
    </location>
</feature>
<feature type="sequence conflict" description="In Ref. 2; AAB60675." evidence="4" ref="2">
    <original>G</original>
    <variation>A</variation>
    <location>
        <position position="14"/>
    </location>
</feature>
<feature type="sequence conflict" description="In Ref. 2; AAB60675." evidence="4" ref="2">
    <original>S</original>
    <variation>P</variation>
    <location>
        <position position="21"/>
    </location>
</feature>
<reference key="1">
    <citation type="journal article" date="1990" name="J. Biol. Chem.">
        <title>A novel mouse gene family coding for cationic, cysteine-rich peptides. Regulation in small intestine and cells of myeloid origin.</title>
        <authorList>
            <person name="Ouellette A.J."/>
            <person name="Lauldi J.C."/>
        </authorList>
    </citation>
    <scope>NUCLEOTIDE SEQUENCE [MRNA]</scope>
    <source>
        <strain>Swiss albino</strain>
        <tissue>Small intestine</tissue>
    </source>
</reference>
<reference key="2">
    <citation type="journal article" date="1994" name="Genomics">
        <title>Structure and diversity of the murine cryptdin gene family.</title>
        <authorList>
            <person name="Huttner K.M."/>
            <person name="Selsted M.E."/>
            <person name="Ouellette A.J."/>
        </authorList>
    </citation>
    <scope>NUCLEOTIDE SEQUENCE [GENOMIC DNA]</scope>
    <source>
        <strain>129</strain>
    </source>
</reference>
<reference key="3">
    <citation type="journal article" date="1989" name="J. Cell Biol.">
        <title>Developmental regulation of cryptdin, a corticostatin/defensin precursor mRNA in mouse small intestinal crypt epithelium.</title>
        <authorList>
            <person name="Ouellette A.J."/>
            <person name="Greco R.M."/>
            <person name="James M."/>
            <person name="Frederick D."/>
            <person name="Naftilan J."/>
            <person name="Fallon J.T."/>
        </authorList>
    </citation>
    <scope>NUCLEOTIDE SEQUENCE [MRNA]</scope>
</reference>
<reference key="4">
    <citation type="journal article" date="1992" name="J. Cell Biol.">
        <title>Enteric defensins: antibiotic peptide components of intestinal host defense.</title>
        <authorList>
            <person name="Selsted M.E."/>
            <person name="Miller S.I."/>
            <person name="Henschen A.H."/>
            <person name="Ouellette A.J."/>
        </authorList>
    </citation>
    <scope>PROTEIN SEQUENCE OF 59-93</scope>
    <source>
        <strain>SWR/J</strain>
        <tissue>Small intestine</tissue>
    </source>
</reference>
<reference key="5">
    <citation type="journal article" date="1992" name="FEBS Lett.">
        <title>Purification and primary structure of murine cryptdin-1, a Paneth cell defensin.</title>
        <authorList>
            <person name="Ouellette A.J."/>
            <person name="Miller S.I."/>
            <person name="Henschen A.H."/>
            <person name="Selsted M.E."/>
        </authorList>
    </citation>
    <scope>PROTEIN SEQUENCE OF 59-93</scope>
    <source>
        <strain>SWR/J</strain>
        <tissue>Intestinal crypt</tissue>
    </source>
</reference>
<evidence type="ECO:0000250" key="1"/>
<evidence type="ECO:0000255" key="2"/>
<evidence type="ECO:0000256" key="3">
    <source>
        <dbReference type="SAM" id="MobiDB-lite"/>
    </source>
</evidence>
<evidence type="ECO:0000305" key="4"/>
<comment type="function">
    <text>Probably contributes to the antimicrobial barrier function of the small bowel mucosa. Has antibacterial activity against attenuated mutants of S.typhimurium.</text>
</comment>
<comment type="subcellular location">
    <subcellularLocation>
        <location>Secreted</location>
    </subcellularLocation>
</comment>
<comment type="tissue specificity">
    <text>Paneth cells of the small bowel.</text>
</comment>
<comment type="developmental stage">
    <text>Accumulates to high levels in mouse intestinal crypt epithelium during postnatal development.</text>
</comment>
<comment type="similarity">
    <text evidence="4">Belongs to the alpha-defensin family.</text>
</comment>
<organism>
    <name type="scientific">Mus musculus</name>
    <name type="common">Mouse</name>
    <dbReference type="NCBI Taxonomy" id="10090"/>
    <lineage>
        <taxon>Eukaryota</taxon>
        <taxon>Metazoa</taxon>
        <taxon>Chordata</taxon>
        <taxon>Craniata</taxon>
        <taxon>Vertebrata</taxon>
        <taxon>Euteleostomi</taxon>
        <taxon>Mammalia</taxon>
        <taxon>Eutheria</taxon>
        <taxon>Euarchontoglires</taxon>
        <taxon>Glires</taxon>
        <taxon>Rodentia</taxon>
        <taxon>Myomorpha</taxon>
        <taxon>Muroidea</taxon>
        <taxon>Muridae</taxon>
        <taxon>Murinae</taxon>
        <taxon>Mus</taxon>
        <taxon>Mus</taxon>
    </lineage>
</organism>
<keyword id="KW-0044">Antibiotic</keyword>
<keyword id="KW-0929">Antimicrobial</keyword>
<keyword id="KW-0211">Defensin</keyword>
<keyword id="KW-0903">Direct protein sequencing</keyword>
<keyword id="KW-1015">Disulfide bond</keyword>
<keyword id="KW-1185">Reference proteome</keyword>
<keyword id="KW-0964">Secreted</keyword>
<keyword id="KW-0732">Signal</keyword>
<name>DEFA1_MOUSE</name>